<gene>
    <name type="primary">TCTP</name>
</gene>
<accession>Q944W6</accession>
<organism>
    <name type="scientific">Brassica oleracea</name>
    <name type="common">Wild cabbage</name>
    <dbReference type="NCBI Taxonomy" id="3712"/>
    <lineage>
        <taxon>Eukaryota</taxon>
        <taxon>Viridiplantae</taxon>
        <taxon>Streptophyta</taxon>
        <taxon>Embryophyta</taxon>
        <taxon>Tracheophyta</taxon>
        <taxon>Spermatophyta</taxon>
        <taxon>Magnoliopsida</taxon>
        <taxon>eudicotyledons</taxon>
        <taxon>Gunneridae</taxon>
        <taxon>Pentapetalae</taxon>
        <taxon>rosids</taxon>
        <taxon>malvids</taxon>
        <taxon>Brassicales</taxon>
        <taxon>Brassicaceae</taxon>
        <taxon>Brassiceae</taxon>
        <taxon>Brassica</taxon>
    </lineage>
</organism>
<dbReference type="EMBL" id="AF418663">
    <property type="protein sequence ID" value="AAL13303.1"/>
    <property type="molecule type" value="mRNA"/>
</dbReference>
<dbReference type="SMR" id="Q944W6"/>
<dbReference type="GO" id="GO:0005737">
    <property type="term" value="C:cytoplasm"/>
    <property type="evidence" value="ECO:0007669"/>
    <property type="project" value="UniProtKB-SubCell"/>
</dbReference>
<dbReference type="GO" id="GO:0005509">
    <property type="term" value="F:calcium ion binding"/>
    <property type="evidence" value="ECO:0007669"/>
    <property type="project" value="TreeGrafter"/>
</dbReference>
<dbReference type="FunFam" id="2.170.150.10:FF:000003">
    <property type="entry name" value="Translationally-controlled tumor protein homolog"/>
    <property type="match status" value="1"/>
</dbReference>
<dbReference type="Gene3D" id="2.170.150.10">
    <property type="entry name" value="Metal Binding Protein, Guanine Nucleotide Exchange Factor, Chain A"/>
    <property type="match status" value="1"/>
</dbReference>
<dbReference type="InterPro" id="IPR011057">
    <property type="entry name" value="Mss4-like_sf"/>
</dbReference>
<dbReference type="InterPro" id="IPR011323">
    <property type="entry name" value="Mss4/transl-control_tumour"/>
</dbReference>
<dbReference type="InterPro" id="IPR034737">
    <property type="entry name" value="TCTP"/>
</dbReference>
<dbReference type="InterPro" id="IPR018103">
    <property type="entry name" value="Translation_control_tumour_CS"/>
</dbReference>
<dbReference type="InterPro" id="IPR018105">
    <property type="entry name" value="Translational_control_tumour_p"/>
</dbReference>
<dbReference type="PANTHER" id="PTHR11991:SF18">
    <property type="entry name" value="GENOME ASSEMBLY, CHROMOSOME: A01"/>
    <property type="match status" value="1"/>
</dbReference>
<dbReference type="PANTHER" id="PTHR11991">
    <property type="entry name" value="TRANSLATIONALLY CONTROLLED TUMOR PROTEIN-RELATED"/>
    <property type="match status" value="1"/>
</dbReference>
<dbReference type="Pfam" id="PF00838">
    <property type="entry name" value="TCTP"/>
    <property type="match status" value="1"/>
</dbReference>
<dbReference type="PRINTS" id="PR01653">
    <property type="entry name" value="TCTPROTEIN"/>
</dbReference>
<dbReference type="SUPFAM" id="SSF51316">
    <property type="entry name" value="Mss4-like"/>
    <property type="match status" value="1"/>
</dbReference>
<dbReference type="PROSITE" id="PS01002">
    <property type="entry name" value="TCTP_1"/>
    <property type="match status" value="1"/>
</dbReference>
<dbReference type="PROSITE" id="PS01003">
    <property type="entry name" value="TCTP_2"/>
    <property type="match status" value="1"/>
</dbReference>
<dbReference type="PROSITE" id="PS51797">
    <property type="entry name" value="TCTP_3"/>
    <property type="match status" value="1"/>
</dbReference>
<reference key="1">
    <citation type="submission" date="2001-09" db="EMBL/GenBank/DDBJ databases">
        <title>Translationally controlled tumor protein: a protein identified in several nontumoral cells including erythrocytes.</title>
        <authorList>
            <person name="Song H."/>
            <person name="Xia Y."/>
            <person name="Lei J."/>
            <person name="Cao B."/>
        </authorList>
    </citation>
    <scope>NUCLEOTIDE SEQUENCE [MRNA]</scope>
</reference>
<evidence type="ECO:0000250" key="1"/>
<evidence type="ECO:0000255" key="2">
    <source>
        <dbReference type="PROSITE-ProRule" id="PRU01133"/>
    </source>
</evidence>
<keyword id="KW-0106">Calcium</keyword>
<keyword id="KW-0963">Cytoplasm</keyword>
<proteinExistence type="evidence at transcript level"/>
<protein>
    <recommendedName>
        <fullName>Translationally-controlled tumor protein homolog</fullName>
        <shortName>TCTP</shortName>
    </recommendedName>
</protein>
<sequence>MLVYTDLLTGDELLSDSFPYKEIENGILWEVEGKWTTKGCVEVNIGANPSAEEGGEDEGVDDSVEKVVDIVDTFRLQEQPTYDKKGFIAYIKKYIKLLTPKLTPEQQEEFKKGIEGATKFLLPKLKDFQFFVGEGMHDDSTIVFAYYKEGATNPTFLYFAHGLKEVKC</sequence>
<name>TCTP_BRAOL</name>
<feature type="chain" id="PRO_0000211298" description="Translationally-controlled tumor protein homolog">
    <location>
        <begin position="1"/>
        <end position="168"/>
    </location>
</feature>
<feature type="domain" description="TCTP" evidence="2">
    <location>
        <begin position="1"/>
        <end position="168"/>
    </location>
</feature>
<comment type="function">
    <text evidence="1">Involved in calcium binding and microtubule stabilization.</text>
</comment>
<comment type="subcellular location">
    <subcellularLocation>
        <location evidence="1">Cytoplasm</location>
    </subcellularLocation>
</comment>
<comment type="similarity">
    <text evidence="2">Belongs to the TCTP family.</text>
</comment>